<proteinExistence type="inferred from homology"/>
<protein>
    <recommendedName>
        <fullName>ABC transporter NFT1</fullName>
    </recommendedName>
    <alternativeName>
        <fullName>New full-length MRP-type transporter 1</fullName>
    </alternativeName>
</protein>
<name>NFT1_YEAS7</name>
<gene>
    <name type="primary">NFT1</name>
    <name type="ORF">SCY_3473</name>
</gene>
<feature type="chain" id="PRO_0000392615" description="ABC transporter NFT1">
    <location>
        <begin position="1"/>
        <end position="1558"/>
    </location>
</feature>
<feature type="topological domain" description="Extracellular" evidence="1">
    <location>
        <begin position="1"/>
        <end position="29"/>
    </location>
</feature>
<feature type="transmembrane region" description="Helical" evidence="3">
    <location>
        <begin position="30"/>
        <end position="50"/>
    </location>
</feature>
<feature type="topological domain" description="Cytoplasmic" evidence="1">
    <location>
        <begin position="51"/>
        <end position="103"/>
    </location>
</feature>
<feature type="transmembrane region" description="Helical" evidence="3">
    <location>
        <begin position="104"/>
        <end position="124"/>
    </location>
</feature>
<feature type="topological domain" description="Extracellular" evidence="1">
    <location>
        <begin position="125"/>
        <end position="130"/>
    </location>
</feature>
<feature type="transmembrane region" description="Helical" evidence="3">
    <location>
        <begin position="131"/>
        <end position="151"/>
    </location>
</feature>
<feature type="topological domain" description="Cytoplasmic" evidence="1">
    <location>
        <begin position="152"/>
        <end position="169"/>
    </location>
</feature>
<feature type="transmembrane region" description="Helical" evidence="3">
    <location>
        <begin position="170"/>
        <end position="190"/>
    </location>
</feature>
<feature type="topological domain" description="Extracellular" evidence="1">
    <location>
        <begin position="191"/>
        <end position="201"/>
    </location>
</feature>
<feature type="transmembrane region" description="Helical" evidence="3">
    <location>
        <begin position="202"/>
        <end position="222"/>
    </location>
</feature>
<feature type="topological domain" description="Cytoplasmic" evidence="1">
    <location>
        <begin position="223"/>
        <end position="302"/>
    </location>
</feature>
<feature type="transmembrane region" description="Helical" evidence="3">
    <location>
        <begin position="303"/>
        <end position="323"/>
    </location>
</feature>
<feature type="topological domain" description="Extracellular" evidence="1">
    <location>
        <begin position="324"/>
        <end position="351"/>
    </location>
</feature>
<feature type="transmembrane region" description="Helical" evidence="3">
    <location>
        <begin position="352"/>
        <end position="374"/>
    </location>
</feature>
<feature type="topological domain" description="Cytoplasmic" evidence="1">
    <location>
        <begin position="375"/>
        <end position="449"/>
    </location>
</feature>
<feature type="transmembrane region" description="Helical" evidence="3">
    <location>
        <begin position="450"/>
        <end position="470"/>
    </location>
</feature>
<feature type="topological domain" description="Extracellular" evidence="1">
    <location>
        <begin position="471"/>
        <end position="481"/>
    </location>
</feature>
<feature type="transmembrane region" description="Helical" evidence="3">
    <location>
        <begin position="482"/>
        <end position="504"/>
    </location>
</feature>
<feature type="topological domain" description="Cytoplasmic" evidence="1">
    <location>
        <begin position="505"/>
        <end position="558"/>
    </location>
</feature>
<feature type="transmembrane region" description="Helical" evidence="3">
    <location>
        <begin position="559"/>
        <end position="579"/>
    </location>
</feature>
<feature type="topological domain" description="Extracellular" evidence="1">
    <location>
        <begin position="580"/>
        <end position="584"/>
    </location>
</feature>
<feature type="transmembrane region" description="Helical" evidence="3">
    <location>
        <begin position="585"/>
        <end position="605"/>
    </location>
</feature>
<feature type="topological domain" description="Cytoplasmic" evidence="1">
    <location>
        <begin position="606"/>
        <end position="953"/>
    </location>
</feature>
<feature type="transmembrane region" description="Helical" evidence="3">
    <location>
        <begin position="954"/>
        <end position="974"/>
    </location>
</feature>
<feature type="topological domain" description="Extracellular" evidence="1">
    <location>
        <begin position="975"/>
        <end position="1013"/>
    </location>
</feature>
<feature type="transmembrane region" description="Helical" evidence="3">
    <location>
        <begin position="1014"/>
        <end position="1034"/>
    </location>
</feature>
<feature type="topological domain" description="Cytoplasmic" evidence="1">
    <location>
        <begin position="1035"/>
        <end position="1082"/>
    </location>
</feature>
<feature type="transmembrane region" description="Helical" evidence="3">
    <location>
        <begin position="1083"/>
        <end position="1105"/>
    </location>
</feature>
<feature type="topological domain" description="Extracellular" evidence="1">
    <location>
        <begin position="1106"/>
        <end position="1109"/>
    </location>
</feature>
<feature type="transmembrane region" description="Helical" evidence="3">
    <location>
        <begin position="1110"/>
        <end position="1132"/>
    </location>
</feature>
<feature type="topological domain" description="Cytoplasmic" evidence="1">
    <location>
        <begin position="1133"/>
        <end position="1199"/>
    </location>
</feature>
<feature type="transmembrane region" description="Helical" evidence="3">
    <location>
        <begin position="1200"/>
        <end position="1220"/>
    </location>
</feature>
<feature type="topological domain" description="Extracellular" evidence="1">
    <location>
        <begin position="1221"/>
        <end position="1222"/>
    </location>
</feature>
<feature type="transmembrane region" description="Helical" evidence="3">
    <location>
        <begin position="1223"/>
        <end position="1243"/>
    </location>
</feature>
<feature type="topological domain" description="Cytoplasmic" evidence="1">
    <location>
        <begin position="1244"/>
        <end position="1558"/>
    </location>
</feature>
<feature type="domain" description="ABC transmembrane type-1 1" evidence="3">
    <location>
        <begin position="311"/>
        <end position="621"/>
    </location>
</feature>
<feature type="domain" description="ABC transporter 1" evidence="2">
    <location>
        <begin position="651"/>
        <end position="892"/>
    </location>
</feature>
<feature type="domain" description="ABC transmembrane type-1 2" evidence="3">
    <location>
        <begin position="961"/>
        <end position="1251"/>
    </location>
</feature>
<feature type="domain" description="ABC transporter 2" evidence="2">
    <location>
        <begin position="1285"/>
        <end position="1538"/>
    </location>
</feature>
<feature type="region of interest" description="Disordered" evidence="4">
    <location>
        <begin position="410"/>
        <end position="434"/>
    </location>
</feature>
<feature type="region of interest" description="Disordered" evidence="4">
    <location>
        <begin position="892"/>
        <end position="926"/>
    </location>
</feature>
<feature type="compositionally biased region" description="Basic and acidic residues" evidence="4">
    <location>
        <begin position="424"/>
        <end position="434"/>
    </location>
</feature>
<feature type="compositionally biased region" description="Polar residues" evidence="4">
    <location>
        <begin position="892"/>
        <end position="901"/>
    </location>
</feature>
<feature type="binding site" evidence="2">
    <location>
        <begin position="686"/>
        <end position="693"/>
    </location>
    <ligand>
        <name>ATP</name>
        <dbReference type="ChEBI" id="CHEBI:30616"/>
    </ligand>
</feature>
<feature type="binding site" evidence="2">
    <location>
        <begin position="1319"/>
        <end position="1326"/>
    </location>
    <ligand>
        <name>ATP</name>
        <dbReference type="ChEBI" id="CHEBI:30616"/>
    </ligand>
</feature>
<feature type="glycosylation site" description="N-linked (GlcNAc...) asparagine" evidence="1">
    <location>
        <position position="4"/>
    </location>
</feature>
<evidence type="ECO:0000255" key="1"/>
<evidence type="ECO:0000255" key="2">
    <source>
        <dbReference type="PROSITE-ProRule" id="PRU00434"/>
    </source>
</evidence>
<evidence type="ECO:0000255" key="3">
    <source>
        <dbReference type="PROSITE-ProRule" id="PRU00441"/>
    </source>
</evidence>
<evidence type="ECO:0000256" key="4">
    <source>
        <dbReference type="SAM" id="MobiDB-lite"/>
    </source>
</evidence>
<evidence type="ECO:0000305" key="5"/>
<accession>A7A063</accession>
<comment type="subcellular location">
    <subcellularLocation>
        <location>Membrane</location>
        <topology>Multi-pass membrane protein</topology>
    </subcellularLocation>
</comment>
<comment type="similarity">
    <text evidence="5">Belongs to the ABC transporter superfamily. ABCC family. Conjugate transporter (TC 3.A.1.208) subfamily.</text>
</comment>
<keyword id="KW-0067">ATP-binding</keyword>
<keyword id="KW-0325">Glycoprotein</keyword>
<keyword id="KW-0472">Membrane</keyword>
<keyword id="KW-0547">Nucleotide-binding</keyword>
<keyword id="KW-0677">Repeat</keyword>
<keyword id="KW-0812">Transmembrane</keyword>
<keyword id="KW-1133">Transmembrane helix</keyword>
<keyword id="KW-0813">Transport</keyword>
<reference key="1">
    <citation type="journal article" date="2007" name="Proc. Natl. Acad. Sci. U.S.A.">
        <title>Genome sequencing and comparative analysis of Saccharomyces cerevisiae strain YJM789.</title>
        <authorList>
            <person name="Wei W."/>
            <person name="McCusker J.H."/>
            <person name="Hyman R.W."/>
            <person name="Jones T."/>
            <person name="Ning Y."/>
            <person name="Cao Z."/>
            <person name="Gu Z."/>
            <person name="Bruno D."/>
            <person name="Miranda M."/>
            <person name="Nguyen M."/>
            <person name="Wilhelmy J."/>
            <person name="Komp C."/>
            <person name="Tamse R."/>
            <person name="Wang X."/>
            <person name="Jia P."/>
            <person name="Luedi P."/>
            <person name="Oefner P.J."/>
            <person name="David L."/>
            <person name="Dietrich F.S."/>
            <person name="Li Y."/>
            <person name="Davis R.W."/>
            <person name="Steinmetz L.M."/>
        </authorList>
    </citation>
    <scope>NUCLEOTIDE SEQUENCE [LARGE SCALE GENOMIC DNA]</scope>
    <source>
        <strain>YJM789</strain>
    </source>
</reference>
<sequence>MIKNGTCPFWERDDLSECARREYIEFKFPLFILLTGMIYAFCKVFRAFYLRRKNHTNEAPEFEEQGNGNHEYARFSVLRLKSAWESRSFCNVNNRSTFDKFKKFIEGAFIVLQLTIHLYILSNMPMDNKKFFHQGFLVQMFLWILLLVVITLRLISASQSFRWVLACKRDLWAVSFYSYASLFTLSILPLRSVFIGKIKDKIMVKYIISETFIDLALLLLLSTSSIEGTRYSFLVENENKKLPPAPTVFGLLTFSRIDRLIWKAYKHCLGNADIWDLDINNKSIAILANFEMSSKKGRLLPNIICYFKAVFISQLFLAFVSSFLNFVPSLLMPRILSYVNDPKSQSWNLVSLYVSSMLVSKIIATTCRGQGLFLGEKGTMQLRTVLISNIYSKTLRRTILKDSTTSLQKNASTSFEENPDSSEAEPRKKSSRKDNSVNNVMSIDAFKVSEAMNTFYLACEAVFMTVTALMILYSLLGWSAFAGTFALLAMIPLNFWCATFYGNYQADQLILTDKRTSGISEALNSIRVIKLLAWENLFYQKIINVRDGEIRLLKKKATIFFLNHLIWFFGPTLVSAITFSVFIKFQNQTLTPTIAFTALSLFAILRTPMDQIASTVSLLIQSFISLERIQDYLNEPETRKYEILEQSNTKFGFEDASMEWEAAETSFKLKNISIDFKLNSLNAIIGPTGSGKSSLLLGLLGELNLLSGKIYVPTVESRDDLEIGKDGMTNSMAYCSQTPWLISGTIKDNVVFGEIFNKQKFDDVMKSCCLDKDIKAMTAGIRTDVGDGGFSLSGGQQQRIALARAIYSSSRYLILDDCLSAVDPETALYIYEECLCGPMMKGRTCIITSHNISLVTKRADWLVILDRGEVKSQGKPSDLIKSNEFLRESINNDSKNTTHNQIDLKRSTTSKKTKNGDPEGENSQDEVCAEVENFEETKMEGSVKFSAYKWLADYFGGLGVVFVFTSSAILIHGITLSQGFWLRYWLETGSSGSKSTWLYRIVEGHSNIYFILTYIVIGFVSSFLTSGKVWIAIISGTNVTKKIFAKLLSSILYAKLRFHNVTPTGRIMNRFSKDMDIIDQQLIPNFEGLSYSVVVCLWIILLIGYVTPQFLLFAIPLCALYYTVCTLYLRASRELKRIDNINISPIHQLFAEAIKGVTTIRALADERRFITQSLVAIDRSNAPFFYLNMATEWITYRVDIIGTLVLFSSSVMIIMKASYLDAGLAGILLSNAFSFTETAQWIIKVFSSVELLMSSVERIKEYTDIPSESNGYISPPANWPQTGDVELKNLSLRYSPHSSKALDNVSFKVKAGTKVGIVGRTGAGKSSIIAAIYRLSDWENGTIIIDNKDIKHIPLERLRNSISCIPQDPTLFDGTVRSNLDPFDRYSDVQIYGVLSKVGLIEECDELSLISEQEQPNFSSHKLRNRFIDLNTVVKSGGSNLSQGQRQLLCLARSMLGARNIMLIDEATASIDYISDAKIQKTIRETMKNTTILTIAHRLRSVIDYDKILVMEMGRVKEYDHPYTLISDRNTIFYRLCRQSGEFENLFELAKVSFDNKR</sequence>
<organism>
    <name type="scientific">Saccharomyces cerevisiae (strain YJM789)</name>
    <name type="common">Baker's yeast</name>
    <dbReference type="NCBI Taxonomy" id="307796"/>
    <lineage>
        <taxon>Eukaryota</taxon>
        <taxon>Fungi</taxon>
        <taxon>Dikarya</taxon>
        <taxon>Ascomycota</taxon>
        <taxon>Saccharomycotina</taxon>
        <taxon>Saccharomycetes</taxon>
        <taxon>Saccharomycetales</taxon>
        <taxon>Saccharomycetaceae</taxon>
        <taxon>Saccharomyces</taxon>
    </lineage>
</organism>
<dbReference type="EMBL" id="AAFW02000152">
    <property type="protein sequence ID" value="EDN60006.1"/>
    <property type="molecule type" value="Genomic_DNA"/>
</dbReference>
<dbReference type="SMR" id="A7A063"/>
<dbReference type="GlyCosmos" id="A7A063">
    <property type="glycosylation" value="1 site, No reported glycans"/>
</dbReference>
<dbReference type="HOGENOM" id="CLU_000604_27_6_1"/>
<dbReference type="OrthoDB" id="25097at4893"/>
<dbReference type="Proteomes" id="UP000007060">
    <property type="component" value="Unassembled WGS sequence"/>
</dbReference>
<dbReference type="GO" id="GO:0000329">
    <property type="term" value="C:fungal-type vacuole membrane"/>
    <property type="evidence" value="ECO:0007669"/>
    <property type="project" value="TreeGrafter"/>
</dbReference>
<dbReference type="GO" id="GO:0140359">
    <property type="term" value="F:ABC-type transporter activity"/>
    <property type="evidence" value="ECO:0007669"/>
    <property type="project" value="InterPro"/>
</dbReference>
<dbReference type="GO" id="GO:0005524">
    <property type="term" value="F:ATP binding"/>
    <property type="evidence" value="ECO:0007669"/>
    <property type="project" value="UniProtKB-KW"/>
</dbReference>
<dbReference type="GO" id="GO:0016887">
    <property type="term" value="F:ATP hydrolysis activity"/>
    <property type="evidence" value="ECO:0007669"/>
    <property type="project" value="InterPro"/>
</dbReference>
<dbReference type="CDD" id="cd18596">
    <property type="entry name" value="ABC_6TM_VMR1_D1_like"/>
    <property type="match status" value="1"/>
</dbReference>
<dbReference type="CDD" id="cd18604">
    <property type="entry name" value="ABC_6TM_VMR1_D2_like"/>
    <property type="match status" value="1"/>
</dbReference>
<dbReference type="CDD" id="cd03369">
    <property type="entry name" value="ABCC_NFT1"/>
    <property type="match status" value="1"/>
</dbReference>
<dbReference type="FunFam" id="1.20.1560.10:FF:000013">
    <property type="entry name" value="ABC transporter C family member 2"/>
    <property type="match status" value="1"/>
</dbReference>
<dbReference type="FunFam" id="3.40.50.300:FF:003545">
    <property type="entry name" value="Predicted protein"/>
    <property type="match status" value="1"/>
</dbReference>
<dbReference type="Gene3D" id="1.20.1560.10">
    <property type="entry name" value="ABC transporter type 1, transmembrane domain"/>
    <property type="match status" value="2"/>
</dbReference>
<dbReference type="Gene3D" id="3.40.50.300">
    <property type="entry name" value="P-loop containing nucleotide triphosphate hydrolases"/>
    <property type="match status" value="2"/>
</dbReference>
<dbReference type="InterPro" id="IPR003593">
    <property type="entry name" value="AAA+_ATPase"/>
</dbReference>
<dbReference type="InterPro" id="IPR011527">
    <property type="entry name" value="ABC1_TM_dom"/>
</dbReference>
<dbReference type="InterPro" id="IPR036640">
    <property type="entry name" value="ABC1_TM_sf"/>
</dbReference>
<dbReference type="InterPro" id="IPR003439">
    <property type="entry name" value="ABC_transporter-like_ATP-bd"/>
</dbReference>
<dbReference type="InterPro" id="IPR017871">
    <property type="entry name" value="ABC_transporter-like_CS"/>
</dbReference>
<dbReference type="InterPro" id="IPR050173">
    <property type="entry name" value="ABC_transporter_C-like"/>
</dbReference>
<dbReference type="InterPro" id="IPR027417">
    <property type="entry name" value="P-loop_NTPase"/>
</dbReference>
<dbReference type="PANTHER" id="PTHR24223:SF353">
    <property type="entry name" value="ABC TRANSPORTER ATP-BINDING PROTEIN_PERMEASE VMR1-RELATED"/>
    <property type="match status" value="1"/>
</dbReference>
<dbReference type="PANTHER" id="PTHR24223">
    <property type="entry name" value="ATP-BINDING CASSETTE SUB-FAMILY C"/>
    <property type="match status" value="1"/>
</dbReference>
<dbReference type="Pfam" id="PF00664">
    <property type="entry name" value="ABC_membrane"/>
    <property type="match status" value="2"/>
</dbReference>
<dbReference type="Pfam" id="PF00005">
    <property type="entry name" value="ABC_tran"/>
    <property type="match status" value="2"/>
</dbReference>
<dbReference type="SMART" id="SM00382">
    <property type="entry name" value="AAA"/>
    <property type="match status" value="2"/>
</dbReference>
<dbReference type="SUPFAM" id="SSF90123">
    <property type="entry name" value="ABC transporter transmembrane region"/>
    <property type="match status" value="2"/>
</dbReference>
<dbReference type="SUPFAM" id="SSF52540">
    <property type="entry name" value="P-loop containing nucleoside triphosphate hydrolases"/>
    <property type="match status" value="2"/>
</dbReference>
<dbReference type="PROSITE" id="PS50929">
    <property type="entry name" value="ABC_TM1F"/>
    <property type="match status" value="2"/>
</dbReference>
<dbReference type="PROSITE" id="PS00211">
    <property type="entry name" value="ABC_TRANSPORTER_1"/>
    <property type="match status" value="2"/>
</dbReference>
<dbReference type="PROSITE" id="PS50893">
    <property type="entry name" value="ABC_TRANSPORTER_2"/>
    <property type="match status" value="2"/>
</dbReference>